<accession>Q5E5B4</accession>
<protein>
    <recommendedName>
        <fullName evidence="1">Ribosomal RNA large subunit methyltransferase K/L</fullName>
    </recommendedName>
    <domain>
        <recommendedName>
            <fullName evidence="1">23S rRNA m2G2445 methyltransferase</fullName>
            <ecNumber evidence="1">2.1.1.173</ecNumber>
        </recommendedName>
        <alternativeName>
            <fullName evidence="1">rRNA (guanine-N(2)-)-methyltransferase RlmL</fullName>
        </alternativeName>
    </domain>
    <domain>
        <recommendedName>
            <fullName evidence="1">23S rRNA m7G2069 methyltransferase</fullName>
            <ecNumber evidence="1">2.1.1.264</ecNumber>
        </recommendedName>
        <alternativeName>
            <fullName evidence="1">rRNA (guanine-N(7)-)-methyltransferase RlmK</fullName>
        </alternativeName>
    </domain>
</protein>
<name>RLMKL_ALIF1</name>
<keyword id="KW-0963">Cytoplasm</keyword>
<keyword id="KW-0489">Methyltransferase</keyword>
<keyword id="KW-1185">Reference proteome</keyword>
<keyword id="KW-0694">RNA-binding</keyword>
<keyword id="KW-0698">rRNA processing</keyword>
<keyword id="KW-0949">S-adenosyl-L-methionine</keyword>
<keyword id="KW-0808">Transferase</keyword>
<proteinExistence type="inferred from homology"/>
<dbReference type="EC" id="2.1.1.173" evidence="1"/>
<dbReference type="EC" id="2.1.1.264" evidence="1"/>
<dbReference type="EMBL" id="CP000020">
    <property type="protein sequence ID" value="AAW85782.1"/>
    <property type="status" value="ALT_INIT"/>
    <property type="molecule type" value="Genomic_DNA"/>
</dbReference>
<dbReference type="RefSeq" id="WP_011261894.1">
    <property type="nucleotide sequence ID" value="NC_006840.2"/>
</dbReference>
<dbReference type="RefSeq" id="YP_204670.2">
    <property type="nucleotide sequence ID" value="NC_006840.2"/>
</dbReference>
<dbReference type="SMR" id="Q5E5B4"/>
<dbReference type="STRING" id="312309.VF_1287"/>
<dbReference type="EnsemblBacteria" id="AAW85782">
    <property type="protein sequence ID" value="AAW85782"/>
    <property type="gene ID" value="VF_1287"/>
</dbReference>
<dbReference type="GeneID" id="54163959"/>
<dbReference type="KEGG" id="vfi:VF_1287"/>
<dbReference type="PATRIC" id="fig|312309.11.peg.1296"/>
<dbReference type="eggNOG" id="COG0116">
    <property type="taxonomic scope" value="Bacteria"/>
</dbReference>
<dbReference type="eggNOG" id="COG1092">
    <property type="taxonomic scope" value="Bacteria"/>
</dbReference>
<dbReference type="HOGENOM" id="CLU_014042_2_0_6"/>
<dbReference type="OrthoDB" id="9809404at2"/>
<dbReference type="Proteomes" id="UP000000537">
    <property type="component" value="Chromosome I"/>
</dbReference>
<dbReference type="GO" id="GO:0005737">
    <property type="term" value="C:cytoplasm"/>
    <property type="evidence" value="ECO:0007669"/>
    <property type="project" value="UniProtKB-SubCell"/>
</dbReference>
<dbReference type="GO" id="GO:0052915">
    <property type="term" value="F:23S rRNA (guanine(2445)-N(2))-methyltransferase activity"/>
    <property type="evidence" value="ECO:0007669"/>
    <property type="project" value="UniProtKB-UniRule"/>
</dbReference>
<dbReference type="GO" id="GO:0003723">
    <property type="term" value="F:RNA binding"/>
    <property type="evidence" value="ECO:0007669"/>
    <property type="project" value="UniProtKB-KW"/>
</dbReference>
<dbReference type="GO" id="GO:0070043">
    <property type="term" value="F:rRNA (guanine-N7-)-methyltransferase activity"/>
    <property type="evidence" value="ECO:0007669"/>
    <property type="project" value="UniProtKB-UniRule"/>
</dbReference>
<dbReference type="CDD" id="cd02440">
    <property type="entry name" value="AdoMet_MTases"/>
    <property type="match status" value="1"/>
</dbReference>
<dbReference type="CDD" id="cd11715">
    <property type="entry name" value="THUMP_AdoMetMT"/>
    <property type="match status" value="1"/>
</dbReference>
<dbReference type="FunFam" id="3.40.50.150:FF:000039">
    <property type="entry name" value="Ribosomal RNA large subunit methyltransferase K/L"/>
    <property type="match status" value="1"/>
</dbReference>
<dbReference type="Gene3D" id="3.30.2130.30">
    <property type="match status" value="1"/>
</dbReference>
<dbReference type="Gene3D" id="3.30.750.80">
    <property type="entry name" value="RNA methyltransferase domain (HRMD) like"/>
    <property type="match status" value="1"/>
</dbReference>
<dbReference type="Gene3D" id="3.40.50.150">
    <property type="entry name" value="Vaccinia Virus protein VP39"/>
    <property type="match status" value="2"/>
</dbReference>
<dbReference type="HAMAP" id="MF_01858">
    <property type="entry name" value="23SrRNA_methyltr_KL"/>
    <property type="match status" value="1"/>
</dbReference>
<dbReference type="InterPro" id="IPR017244">
    <property type="entry name" value="23SrRNA_methyltr_KL"/>
</dbReference>
<dbReference type="InterPro" id="IPR002052">
    <property type="entry name" value="DNA_methylase_N6_adenine_CS"/>
</dbReference>
<dbReference type="InterPro" id="IPR000241">
    <property type="entry name" value="RlmKL-like_Mtase"/>
</dbReference>
<dbReference type="InterPro" id="IPR053943">
    <property type="entry name" value="RlmKL-like_Mtase_CS"/>
</dbReference>
<dbReference type="InterPro" id="IPR054170">
    <property type="entry name" value="RlmL_1st"/>
</dbReference>
<dbReference type="InterPro" id="IPR019614">
    <property type="entry name" value="SAM-dep_methyl-trfase"/>
</dbReference>
<dbReference type="InterPro" id="IPR029063">
    <property type="entry name" value="SAM-dependent_MTases_sf"/>
</dbReference>
<dbReference type="InterPro" id="IPR004114">
    <property type="entry name" value="THUMP_dom"/>
</dbReference>
<dbReference type="NCBIfam" id="NF008748">
    <property type="entry name" value="PRK11783.1"/>
    <property type="match status" value="1"/>
</dbReference>
<dbReference type="PANTHER" id="PTHR47313">
    <property type="entry name" value="RIBOSOMAL RNA LARGE SUBUNIT METHYLTRANSFERASE K/L"/>
    <property type="match status" value="1"/>
</dbReference>
<dbReference type="PANTHER" id="PTHR47313:SF1">
    <property type="entry name" value="RIBOSOMAL RNA LARGE SUBUNIT METHYLTRANSFERASE K_L"/>
    <property type="match status" value="1"/>
</dbReference>
<dbReference type="Pfam" id="PF10672">
    <property type="entry name" value="Methyltrans_SAM"/>
    <property type="match status" value="1"/>
</dbReference>
<dbReference type="Pfam" id="PF22020">
    <property type="entry name" value="RlmL_1st"/>
    <property type="match status" value="1"/>
</dbReference>
<dbReference type="Pfam" id="PF02926">
    <property type="entry name" value="THUMP"/>
    <property type="match status" value="1"/>
</dbReference>
<dbReference type="Pfam" id="PF01170">
    <property type="entry name" value="UPF0020"/>
    <property type="match status" value="1"/>
</dbReference>
<dbReference type="PIRSF" id="PIRSF037618">
    <property type="entry name" value="RNA_Mtase_bacteria_prd"/>
    <property type="match status" value="1"/>
</dbReference>
<dbReference type="SMART" id="SM00981">
    <property type="entry name" value="THUMP"/>
    <property type="match status" value="1"/>
</dbReference>
<dbReference type="SUPFAM" id="SSF53335">
    <property type="entry name" value="S-adenosyl-L-methionine-dependent methyltransferases"/>
    <property type="match status" value="2"/>
</dbReference>
<dbReference type="PROSITE" id="PS51165">
    <property type="entry name" value="THUMP"/>
    <property type="match status" value="1"/>
</dbReference>
<dbReference type="PROSITE" id="PS01261">
    <property type="entry name" value="UPF0020"/>
    <property type="match status" value="1"/>
</dbReference>
<organism>
    <name type="scientific">Aliivibrio fischeri (strain ATCC 700601 / ES114)</name>
    <name type="common">Vibrio fischeri</name>
    <dbReference type="NCBI Taxonomy" id="312309"/>
    <lineage>
        <taxon>Bacteria</taxon>
        <taxon>Pseudomonadati</taxon>
        <taxon>Pseudomonadota</taxon>
        <taxon>Gammaproteobacteria</taxon>
        <taxon>Vibrionales</taxon>
        <taxon>Vibrionaceae</taxon>
        <taxon>Aliivibrio</taxon>
    </lineage>
</organism>
<reference key="1">
    <citation type="journal article" date="2005" name="Proc. Natl. Acad. Sci. U.S.A.">
        <title>Complete genome sequence of Vibrio fischeri: a symbiotic bacterium with pathogenic congeners.</title>
        <authorList>
            <person name="Ruby E.G."/>
            <person name="Urbanowski M."/>
            <person name="Campbell J."/>
            <person name="Dunn A."/>
            <person name="Faini M."/>
            <person name="Gunsalus R."/>
            <person name="Lostroh P."/>
            <person name="Lupp C."/>
            <person name="McCann J."/>
            <person name="Millikan D."/>
            <person name="Schaefer A."/>
            <person name="Stabb E."/>
            <person name="Stevens A."/>
            <person name="Visick K."/>
            <person name="Whistler C."/>
            <person name="Greenberg E.P."/>
        </authorList>
    </citation>
    <scope>NUCLEOTIDE SEQUENCE [LARGE SCALE GENOMIC DNA]</scope>
    <source>
        <strain>ATCC 700601 / ES114</strain>
    </source>
</reference>
<comment type="function">
    <text evidence="1">Specifically methylates the guanine in position 2445 (m2G2445) and the guanine in position 2069 (m7G2069) of 23S rRNA.</text>
</comment>
<comment type="catalytic activity">
    <reaction evidence="1">
        <text>guanosine(2445) in 23S rRNA + S-adenosyl-L-methionine = N(2)-methylguanosine(2445) in 23S rRNA + S-adenosyl-L-homocysteine + H(+)</text>
        <dbReference type="Rhea" id="RHEA:42740"/>
        <dbReference type="Rhea" id="RHEA-COMP:10215"/>
        <dbReference type="Rhea" id="RHEA-COMP:10216"/>
        <dbReference type="ChEBI" id="CHEBI:15378"/>
        <dbReference type="ChEBI" id="CHEBI:57856"/>
        <dbReference type="ChEBI" id="CHEBI:59789"/>
        <dbReference type="ChEBI" id="CHEBI:74269"/>
        <dbReference type="ChEBI" id="CHEBI:74481"/>
        <dbReference type="EC" id="2.1.1.173"/>
    </reaction>
</comment>
<comment type="catalytic activity">
    <reaction evidence="1">
        <text>guanosine(2069) in 23S rRNA + S-adenosyl-L-methionine = N(2)-methylguanosine(2069) in 23S rRNA + S-adenosyl-L-homocysteine + H(+)</text>
        <dbReference type="Rhea" id="RHEA:43772"/>
        <dbReference type="Rhea" id="RHEA-COMP:10688"/>
        <dbReference type="Rhea" id="RHEA-COMP:10689"/>
        <dbReference type="ChEBI" id="CHEBI:15378"/>
        <dbReference type="ChEBI" id="CHEBI:57856"/>
        <dbReference type="ChEBI" id="CHEBI:59789"/>
        <dbReference type="ChEBI" id="CHEBI:74269"/>
        <dbReference type="ChEBI" id="CHEBI:74481"/>
        <dbReference type="EC" id="2.1.1.264"/>
    </reaction>
</comment>
<comment type="subcellular location">
    <subcellularLocation>
        <location evidence="1">Cytoplasm</location>
    </subcellularLocation>
</comment>
<comment type="similarity">
    <text evidence="1">Belongs to the methyltransferase superfamily. RlmKL family.</text>
</comment>
<comment type="sequence caution" evidence="2">
    <conflict type="erroneous initiation">
        <sequence resource="EMBL-CDS" id="AAW85782"/>
    </conflict>
    <text>Extended N-terminus.</text>
</comment>
<feature type="chain" id="PRO_0000366848" description="Ribosomal RNA large subunit methyltransferase K/L">
    <location>
        <begin position="1"/>
        <end position="705"/>
    </location>
</feature>
<feature type="domain" description="THUMP" evidence="1">
    <location>
        <begin position="43"/>
        <end position="154"/>
    </location>
</feature>
<evidence type="ECO:0000255" key="1">
    <source>
        <dbReference type="HAMAP-Rule" id="MF_01858"/>
    </source>
</evidence>
<evidence type="ECO:0000305" key="2"/>
<gene>
    <name evidence="1" type="primary">rlmL</name>
    <name type="ordered locus">VF_1287</name>
</gene>
<sequence>MKKYLAITSKGLENLLADELIALGVTDPKVVHAGVKFEAPIEVVYRCCLWSRIASRFIQILSEFDVRDDMDLYLGASSINWPSYFSADKTLVVDFNGTNREIRNSQYGALKVKDAIVDRFTKADLARPNISKVEPDLRVHMRLSGEKGILGFDLVGSGLHQRGYRTEAGRAPLRETLAAALVMRSTWDESKPLLDPMCGSGTLLIEAALMACEMAPGVKREKWCFEALNDFDAELWAEIRSEARVKSRRGVKKVDARFYGFDRDYRVIQTARENARRAGVEDLITFDVGDATKVECPEGFENGVILCNPPYGERLSTEPALIALYSEFGRQLKEVFGGCTASIYSSNDDLLACLRMRADKQFKLNNGALPCVQKNYSITESAERKEAVSIEVAPEFMNRLKKNIGKIGKWARKEKLDCYRIYDADLPDYNAAIDVYKDYIIIQEYAAPKTISEDKARRRLTDMIRATVLVTGVETNNVILKVRQKQSGKNQYQKLAEKSRYFDVEEYGVKLIVNLQDYLDTGLFLDHKLTRKMLGEIAAGKDFLNLFAYTGSATVHAACGGAKSTMTIDMSRTYLEWAQKNMNTNGQTGTQHQFLQADCLQWLQQADGEFDLIFIDPPTFSNSKRMEQTFDVQRDHIMLLENLKRMLRENGTIVFSNNKRNFKMDEAGLEKAGLKAKNISKQTLPLDFARNKHIHNCWIITHKED</sequence>